<organism>
    <name type="scientific">Felis catus</name>
    <name type="common">Cat</name>
    <name type="synonym">Felis silvestris catus</name>
    <dbReference type="NCBI Taxonomy" id="9685"/>
    <lineage>
        <taxon>Eukaryota</taxon>
        <taxon>Metazoa</taxon>
        <taxon>Chordata</taxon>
        <taxon>Craniata</taxon>
        <taxon>Vertebrata</taxon>
        <taxon>Euteleostomi</taxon>
        <taxon>Mammalia</taxon>
        <taxon>Eutheria</taxon>
        <taxon>Laurasiatheria</taxon>
        <taxon>Carnivora</taxon>
        <taxon>Feliformia</taxon>
        <taxon>Felidae</taxon>
        <taxon>Felinae</taxon>
        <taxon>Felis</taxon>
    </lineage>
</organism>
<reference key="1">
    <citation type="submission" date="2003-10" db="EMBL/GenBank/DDBJ databases">
        <title>Molecular characterization of feline glycogen storage disease type IV.</title>
        <authorList>
            <person name="Fyfe J.C."/>
            <person name="Hawkins M.G."/>
            <person name="Henthorn P.S."/>
        </authorList>
    </citation>
    <scope>NUCLEOTIDE SEQUENCE [MRNA]</scope>
    <scope>DISEASE</scope>
</reference>
<gene>
    <name type="primary">GBE1</name>
</gene>
<dbReference type="EC" id="2.4.1.18" evidence="1"/>
<dbReference type="EMBL" id="AY439007">
    <property type="protein sequence ID" value="AAR13899.1"/>
    <property type="molecule type" value="mRNA"/>
</dbReference>
<dbReference type="RefSeq" id="NP_001009872.1">
    <property type="nucleotide sequence ID" value="NM_001009872.1"/>
</dbReference>
<dbReference type="SMR" id="Q6T308"/>
<dbReference type="STRING" id="9685.ENSFCAP00000049901"/>
<dbReference type="CAZy" id="CBM48">
    <property type="family name" value="Carbohydrate-Binding Module Family 48"/>
</dbReference>
<dbReference type="CAZy" id="GH13">
    <property type="family name" value="Glycoside Hydrolase Family 13"/>
</dbReference>
<dbReference type="PaxDb" id="9685-ENSFCAP00000025102"/>
<dbReference type="GeneID" id="493962"/>
<dbReference type="KEGG" id="fca:493962"/>
<dbReference type="CTD" id="2632"/>
<dbReference type="eggNOG" id="KOG0470">
    <property type="taxonomic scope" value="Eukaryota"/>
</dbReference>
<dbReference type="InParanoid" id="Q6T308"/>
<dbReference type="OrthoDB" id="196493at2759"/>
<dbReference type="UniPathway" id="UPA00164"/>
<dbReference type="Proteomes" id="UP000011712">
    <property type="component" value="Unplaced"/>
</dbReference>
<dbReference type="GO" id="GO:0005737">
    <property type="term" value="C:cytoplasm"/>
    <property type="evidence" value="ECO:0000250"/>
    <property type="project" value="UniProtKB"/>
</dbReference>
<dbReference type="GO" id="GO:0003844">
    <property type="term" value="F:1,4-alpha-glucan branching enzyme activity"/>
    <property type="evidence" value="ECO:0000250"/>
    <property type="project" value="UniProtKB"/>
</dbReference>
<dbReference type="GO" id="GO:0043169">
    <property type="term" value="F:cation binding"/>
    <property type="evidence" value="ECO:0007669"/>
    <property type="project" value="InterPro"/>
</dbReference>
<dbReference type="GO" id="GO:0004553">
    <property type="term" value="F:hydrolase activity, hydrolyzing O-glycosyl compounds"/>
    <property type="evidence" value="ECO:0007669"/>
    <property type="project" value="InterPro"/>
</dbReference>
<dbReference type="GO" id="GO:0005978">
    <property type="term" value="P:glycogen biosynthetic process"/>
    <property type="evidence" value="ECO:0000250"/>
    <property type="project" value="UniProtKB"/>
</dbReference>
<dbReference type="CDD" id="cd11321">
    <property type="entry name" value="AmyAc_bac_euk_BE"/>
    <property type="match status" value="1"/>
</dbReference>
<dbReference type="CDD" id="cd02854">
    <property type="entry name" value="E_set_GBE_euk_N"/>
    <property type="match status" value="1"/>
</dbReference>
<dbReference type="FunFam" id="3.20.20.80:FF:000001">
    <property type="entry name" value="1,4-alpha-glucan branching enzyme"/>
    <property type="match status" value="1"/>
</dbReference>
<dbReference type="FunFam" id="2.60.40.1180:FF:000014">
    <property type="entry name" value="1,4-alpha-glucan-branching enzyme"/>
    <property type="match status" value="1"/>
</dbReference>
<dbReference type="FunFam" id="2.60.40.10:FF:000550">
    <property type="entry name" value="1,4-alpha-glucan-branching enzyme isoform B"/>
    <property type="match status" value="1"/>
</dbReference>
<dbReference type="Gene3D" id="3.20.20.80">
    <property type="entry name" value="Glycosidases"/>
    <property type="match status" value="1"/>
</dbReference>
<dbReference type="Gene3D" id="2.60.40.1180">
    <property type="entry name" value="Golgi alpha-mannosidase II"/>
    <property type="match status" value="1"/>
</dbReference>
<dbReference type="Gene3D" id="2.60.40.10">
    <property type="entry name" value="Immunoglobulins"/>
    <property type="match status" value="1"/>
</dbReference>
<dbReference type="InterPro" id="IPR006048">
    <property type="entry name" value="A-amylase/branching_C"/>
</dbReference>
<dbReference type="InterPro" id="IPR037439">
    <property type="entry name" value="Branching_enzy"/>
</dbReference>
<dbReference type="InterPro" id="IPR006047">
    <property type="entry name" value="Glyco_hydro_13_cat_dom"/>
</dbReference>
<dbReference type="InterPro" id="IPR004193">
    <property type="entry name" value="Glyco_hydro_13_N"/>
</dbReference>
<dbReference type="InterPro" id="IPR013780">
    <property type="entry name" value="Glyco_hydro_b"/>
</dbReference>
<dbReference type="InterPro" id="IPR017853">
    <property type="entry name" value="Glycoside_hydrolase_SF"/>
</dbReference>
<dbReference type="InterPro" id="IPR013783">
    <property type="entry name" value="Ig-like_fold"/>
</dbReference>
<dbReference type="InterPro" id="IPR014756">
    <property type="entry name" value="Ig_E-set"/>
</dbReference>
<dbReference type="PANTHER" id="PTHR43651">
    <property type="entry name" value="1,4-ALPHA-GLUCAN-BRANCHING ENZYME"/>
    <property type="match status" value="1"/>
</dbReference>
<dbReference type="PANTHER" id="PTHR43651:SF3">
    <property type="entry name" value="1,4-ALPHA-GLUCAN-BRANCHING ENZYME"/>
    <property type="match status" value="1"/>
</dbReference>
<dbReference type="Pfam" id="PF00128">
    <property type="entry name" value="Alpha-amylase"/>
    <property type="match status" value="1"/>
</dbReference>
<dbReference type="Pfam" id="PF02806">
    <property type="entry name" value="Alpha-amylase_C"/>
    <property type="match status" value="1"/>
</dbReference>
<dbReference type="Pfam" id="PF02922">
    <property type="entry name" value="CBM_48"/>
    <property type="match status" value="1"/>
</dbReference>
<dbReference type="PIRSF" id="PIRSF000463">
    <property type="entry name" value="GlgB"/>
    <property type="match status" value="1"/>
</dbReference>
<dbReference type="SMART" id="SM00642">
    <property type="entry name" value="Aamy"/>
    <property type="match status" value="1"/>
</dbReference>
<dbReference type="SUPFAM" id="SSF51445">
    <property type="entry name" value="(Trans)glycosidases"/>
    <property type="match status" value="1"/>
</dbReference>
<dbReference type="SUPFAM" id="SSF81296">
    <property type="entry name" value="E set domains"/>
    <property type="match status" value="1"/>
</dbReference>
<dbReference type="SUPFAM" id="SSF51011">
    <property type="entry name" value="Glycosyl hydrolase domain"/>
    <property type="match status" value="1"/>
</dbReference>
<proteinExistence type="evidence at transcript level"/>
<protein>
    <recommendedName>
        <fullName>1,4-alpha-glucan-branching enzyme</fullName>
        <ecNumber evidence="1">2.4.1.18</ecNumber>
    </recommendedName>
    <alternativeName>
        <fullName>Brancher enzyme</fullName>
    </alternativeName>
    <alternativeName>
        <fullName>Glycogen-branching enzyme</fullName>
    </alternativeName>
</protein>
<evidence type="ECO:0000250" key="1">
    <source>
        <dbReference type="UniProtKB" id="Q04446"/>
    </source>
</evidence>
<evidence type="ECO:0000250" key="2">
    <source>
        <dbReference type="UniProtKB" id="Q6FJV0"/>
    </source>
</evidence>
<evidence type="ECO:0000269" key="3">
    <source ref="1"/>
</evidence>
<evidence type="ECO:0000305" key="4"/>
<accession>Q6T308</accession>
<keyword id="KW-0320">Glycogen biosynthesis</keyword>
<keyword id="KW-0322">Glycogen storage disease</keyword>
<keyword id="KW-0328">Glycosyltransferase</keyword>
<keyword id="KW-0597">Phosphoprotein</keyword>
<keyword id="KW-1185">Reference proteome</keyword>
<keyword id="KW-0808">Transferase</keyword>
<name>GLGB_FELCA</name>
<sequence>MAAPVARGECSEAALAAALADVPELARLLELDPYLKPFALDFQRRYKKFNETLNNIGENEGGIDKFSRGYESFGVHRCADGGLYCKEWAPGAEGVFLTGDFNDWNPFSYPYKKLDYGKWELYIPPKQNKSQLVPHGSKLKVVIRSKSGEILYRISPWAKYVTREGENVNYDWTHWDPEHPYKFKHSRPKKPRGVRIYESHVGISSYEGKIASYKHFTYNVLPRIKDLGYNCIQMMAIMEHAYYASFGYQITSFFAASSRYGTPEELKELVDTAHSMGITVLLDVVHSHASKNSEDGLNMFDGTDSCYFHSGPRGNHDLWDSRLFIYSSWEVLRFLLSNIRWWLEEYGFDGFRFDGVTSMLYHHHGMGQAFSGDYHEYFGLQVDEDALIYLMLANHLVHTLYPNSITIAEDVSGMPALCSPISQGGVGFDYRLAMAIPDKWIQLLKEFKDEDWNMGNIVYTLTNRRYLEKCIAYAESHDQALVGDKTLAFWLMDAEMYTNMSVLTPFTPVIDRGIQLHKMIRLITHALGGEGYLNFMGNEFGHPEWLDFPRKGNNESYHYARRQFHLTDDDLLRYKFLNNFDRDMNKLEERCGWLSAPQAFVSEKHEGNKIIAFERAGLVFIFNFHPSKSYTDYRVGTTLPGKFRIVLDTDAAEYGGHQRLDHSTEFFSQPFKHNERPCSLLVYIPNRVGLILQNVDMPN</sequence>
<feature type="chain" id="PRO_0000188773" description="1,4-alpha-glucan-branching enzyme">
    <location>
        <begin position="1"/>
        <end position="699"/>
    </location>
</feature>
<feature type="active site" description="Nucleophile" evidence="1">
    <location>
        <position position="354"/>
    </location>
</feature>
<feature type="active site" description="Proton donor" evidence="1">
    <location>
        <position position="409"/>
    </location>
</feature>
<feature type="binding site" evidence="1">
    <location>
        <begin position="59"/>
        <end position="60"/>
    </location>
    <ligand>
        <name>substrate</name>
    </ligand>
</feature>
<feature type="binding site" evidence="1">
    <location>
        <begin position="88"/>
        <end position="90"/>
    </location>
    <ligand>
        <name>substrate</name>
    </ligand>
</feature>
<feature type="binding site" evidence="2">
    <location>
        <position position="104"/>
    </location>
    <ligand>
        <name>(1,4-alpha-D-glucosyl)n</name>
        <dbReference type="ChEBI" id="CHEBI:15444"/>
    </ligand>
</feature>
<feature type="binding site" evidence="1">
    <location>
        <begin position="115"/>
        <end position="118"/>
    </location>
    <ligand>
        <name>substrate</name>
    </ligand>
</feature>
<feature type="binding site" evidence="2">
    <location>
        <position position="140"/>
    </location>
    <ligand>
        <name>(1,4-alpha-D-glucosyl)n</name>
        <dbReference type="ChEBI" id="CHEBI:15444"/>
    </ligand>
</feature>
<feature type="binding site" evidence="1">
    <location>
        <begin position="330"/>
        <end position="333"/>
    </location>
    <ligand>
        <name>substrate</name>
    </ligand>
</feature>
<feature type="site" description="Transition state stabilizer" evidence="1">
    <location>
        <position position="478"/>
    </location>
</feature>
<feature type="modified residue" description="Phosphotyrosine" evidence="1">
    <location>
        <position position="170"/>
    </location>
</feature>
<comment type="function">
    <text evidence="1">Glycogen-branching enzyme participates in the glycogen biosynthetic process along with glycogenin and glycogen synthase. Generates alpha-1,6-glucosidic branches from alpha-1,4-linked glucose chains, to increase solubility of the glycogen polymer.</text>
</comment>
<comment type="catalytic activity">
    <reaction evidence="1">
        <text>Transfers a segment of a (1-&gt;4)-alpha-D-glucan chain to a primary hydroxy group in a similar glucan chain.</text>
        <dbReference type="EC" id="2.4.1.18"/>
    </reaction>
</comment>
<comment type="pathway">
    <text evidence="1">Glycan biosynthesis; glycogen biosynthesis.</text>
</comment>
<comment type="subunit">
    <text evidence="1">Monomer.</text>
</comment>
<comment type="domain">
    <text evidence="1">Binds its carbohydrate substrate close to the active site, but also via regions close to the N-terminus; this may result in increased affinity and therefore increased catalytic efficiency.</text>
</comment>
<comment type="disease">
    <text evidence="3">Defects in GBE1 are the cause of glycogen storage disease IV (GSD-IV).</text>
</comment>
<comment type="similarity">
    <text evidence="4">Belongs to the glycosyl hydrolase 13 family. GlgB subfamily.</text>
</comment>